<gene>
    <name evidence="1" type="primary">rplA</name>
    <name type="ordered locus">FP1179</name>
</gene>
<comment type="function">
    <text evidence="1">Binds directly to 23S rRNA. The L1 stalk is quite mobile in the ribosome, and is involved in E site tRNA release.</text>
</comment>
<comment type="function">
    <text evidence="1">Protein L1 is also a translational repressor protein, it controls the translation of the L11 operon by binding to its mRNA.</text>
</comment>
<comment type="subunit">
    <text evidence="1">Part of the 50S ribosomal subunit.</text>
</comment>
<comment type="similarity">
    <text evidence="1">Belongs to the universal ribosomal protein uL1 family.</text>
</comment>
<feature type="chain" id="PRO_0000308006" description="Large ribosomal subunit protein uL1">
    <location>
        <begin position="1"/>
        <end position="229"/>
    </location>
</feature>
<dbReference type="EMBL" id="AM398681">
    <property type="protein sequence ID" value="CAL43266.1"/>
    <property type="molecule type" value="Genomic_DNA"/>
</dbReference>
<dbReference type="RefSeq" id="WP_011963315.1">
    <property type="nucleotide sequence ID" value="NC_009613.3"/>
</dbReference>
<dbReference type="RefSeq" id="YP_001296077.1">
    <property type="nucleotide sequence ID" value="NC_009613.3"/>
</dbReference>
<dbReference type="SMR" id="A6GYU3"/>
<dbReference type="STRING" id="402612.FP1179"/>
<dbReference type="EnsemblBacteria" id="CAL43266">
    <property type="protein sequence ID" value="CAL43266"/>
    <property type="gene ID" value="FP1179"/>
</dbReference>
<dbReference type="GeneID" id="66553083"/>
<dbReference type="KEGG" id="fps:FP1179"/>
<dbReference type="PATRIC" id="fig|402612.5.peg.1196"/>
<dbReference type="eggNOG" id="COG0081">
    <property type="taxonomic scope" value="Bacteria"/>
</dbReference>
<dbReference type="HOGENOM" id="CLU_062853_0_0_10"/>
<dbReference type="OrthoDB" id="9803740at2"/>
<dbReference type="Proteomes" id="UP000006394">
    <property type="component" value="Chromosome"/>
</dbReference>
<dbReference type="GO" id="GO:0015934">
    <property type="term" value="C:large ribosomal subunit"/>
    <property type="evidence" value="ECO:0007669"/>
    <property type="project" value="InterPro"/>
</dbReference>
<dbReference type="GO" id="GO:0019843">
    <property type="term" value="F:rRNA binding"/>
    <property type="evidence" value="ECO:0007669"/>
    <property type="project" value="UniProtKB-UniRule"/>
</dbReference>
<dbReference type="GO" id="GO:0003735">
    <property type="term" value="F:structural constituent of ribosome"/>
    <property type="evidence" value="ECO:0007669"/>
    <property type="project" value="InterPro"/>
</dbReference>
<dbReference type="GO" id="GO:0000049">
    <property type="term" value="F:tRNA binding"/>
    <property type="evidence" value="ECO:0007669"/>
    <property type="project" value="UniProtKB-KW"/>
</dbReference>
<dbReference type="GO" id="GO:0006417">
    <property type="term" value="P:regulation of translation"/>
    <property type="evidence" value="ECO:0007669"/>
    <property type="project" value="UniProtKB-KW"/>
</dbReference>
<dbReference type="GO" id="GO:0006412">
    <property type="term" value="P:translation"/>
    <property type="evidence" value="ECO:0007669"/>
    <property type="project" value="UniProtKB-UniRule"/>
</dbReference>
<dbReference type="CDD" id="cd00403">
    <property type="entry name" value="Ribosomal_L1"/>
    <property type="match status" value="1"/>
</dbReference>
<dbReference type="FunFam" id="3.40.50.790:FF:000001">
    <property type="entry name" value="50S ribosomal protein L1"/>
    <property type="match status" value="1"/>
</dbReference>
<dbReference type="Gene3D" id="3.30.190.20">
    <property type="match status" value="1"/>
</dbReference>
<dbReference type="Gene3D" id="3.40.50.790">
    <property type="match status" value="1"/>
</dbReference>
<dbReference type="HAMAP" id="MF_01318_B">
    <property type="entry name" value="Ribosomal_uL1_B"/>
    <property type="match status" value="1"/>
</dbReference>
<dbReference type="InterPro" id="IPR005878">
    <property type="entry name" value="Ribosom_uL1_bac-type"/>
</dbReference>
<dbReference type="InterPro" id="IPR002143">
    <property type="entry name" value="Ribosomal_uL1"/>
</dbReference>
<dbReference type="InterPro" id="IPR023674">
    <property type="entry name" value="Ribosomal_uL1-like"/>
</dbReference>
<dbReference type="InterPro" id="IPR028364">
    <property type="entry name" value="Ribosomal_uL1/biogenesis"/>
</dbReference>
<dbReference type="InterPro" id="IPR016095">
    <property type="entry name" value="Ribosomal_uL1_3-a/b-sand"/>
</dbReference>
<dbReference type="InterPro" id="IPR023673">
    <property type="entry name" value="Ribosomal_uL1_CS"/>
</dbReference>
<dbReference type="NCBIfam" id="TIGR01169">
    <property type="entry name" value="rplA_bact"/>
    <property type="match status" value="1"/>
</dbReference>
<dbReference type="PANTHER" id="PTHR36427">
    <property type="entry name" value="54S RIBOSOMAL PROTEIN L1, MITOCHONDRIAL"/>
    <property type="match status" value="1"/>
</dbReference>
<dbReference type="PANTHER" id="PTHR36427:SF3">
    <property type="entry name" value="LARGE RIBOSOMAL SUBUNIT PROTEIN UL1M"/>
    <property type="match status" value="1"/>
</dbReference>
<dbReference type="Pfam" id="PF00687">
    <property type="entry name" value="Ribosomal_L1"/>
    <property type="match status" value="1"/>
</dbReference>
<dbReference type="PIRSF" id="PIRSF002155">
    <property type="entry name" value="Ribosomal_L1"/>
    <property type="match status" value="1"/>
</dbReference>
<dbReference type="SUPFAM" id="SSF56808">
    <property type="entry name" value="Ribosomal protein L1"/>
    <property type="match status" value="1"/>
</dbReference>
<dbReference type="PROSITE" id="PS01199">
    <property type="entry name" value="RIBOSOMAL_L1"/>
    <property type="match status" value="1"/>
</dbReference>
<reference key="1">
    <citation type="journal article" date="2007" name="Nat. Biotechnol.">
        <title>Complete genome sequence of the fish pathogen Flavobacterium psychrophilum.</title>
        <authorList>
            <person name="Duchaud E."/>
            <person name="Boussaha M."/>
            <person name="Loux V."/>
            <person name="Bernardet J.-F."/>
            <person name="Michel C."/>
            <person name="Kerouault B."/>
            <person name="Mondot S."/>
            <person name="Nicolas P."/>
            <person name="Bossy R."/>
            <person name="Caron C."/>
            <person name="Bessieres P."/>
            <person name="Gibrat J.-F."/>
            <person name="Claverol S."/>
            <person name="Dumetz F."/>
            <person name="Le Henaff M."/>
            <person name="Benmansour A."/>
        </authorList>
    </citation>
    <scope>NUCLEOTIDE SEQUENCE [LARGE SCALE GENOMIC DNA]</scope>
    <source>
        <strain>ATCC 49511 / DSM 21280 / CIP 103535 / JIP02/86</strain>
    </source>
</reference>
<proteinExistence type="inferred from homology"/>
<evidence type="ECO:0000255" key="1">
    <source>
        <dbReference type="HAMAP-Rule" id="MF_01318"/>
    </source>
</evidence>
<evidence type="ECO:0000305" key="2"/>
<name>RL1_FLAPJ</name>
<organism>
    <name type="scientific">Flavobacterium psychrophilum (strain ATCC 49511 / DSM 21280 / CIP 103535 / JIP02/86)</name>
    <dbReference type="NCBI Taxonomy" id="402612"/>
    <lineage>
        <taxon>Bacteria</taxon>
        <taxon>Pseudomonadati</taxon>
        <taxon>Bacteroidota</taxon>
        <taxon>Flavobacteriia</taxon>
        <taxon>Flavobacteriales</taxon>
        <taxon>Flavobacteriaceae</taxon>
        <taxon>Flavobacterium</taxon>
    </lineage>
</organism>
<keyword id="KW-1185">Reference proteome</keyword>
<keyword id="KW-0678">Repressor</keyword>
<keyword id="KW-0687">Ribonucleoprotein</keyword>
<keyword id="KW-0689">Ribosomal protein</keyword>
<keyword id="KW-0694">RNA-binding</keyword>
<keyword id="KW-0699">rRNA-binding</keyword>
<keyword id="KW-0810">Translation regulation</keyword>
<keyword id="KW-0820">tRNA-binding</keyword>
<accession>A6GYU3</accession>
<sequence>MAKLTKKQKEAVSKIEKNKLYSLKDASVLIKQIASAKFDESVDIAVKLGVDPRKANQMVRGVVALPHGTGKNMRVLALVTPDKEAEAKEAGADFVGLDDYLQKIKDGWTDVDVIVTMPAVMGKLGPLGRILGPRGLMPNPKTGTVTMEIGKAVTEIKAGKIDFKVDKTGIVHAGIGRISFDADKIMENAHEIIQTLIKLKPTAAKGTYIKSIHLTSTMSPAIALDPKAV</sequence>
<protein>
    <recommendedName>
        <fullName evidence="1">Large ribosomal subunit protein uL1</fullName>
    </recommendedName>
    <alternativeName>
        <fullName evidence="2">50S ribosomal protein L1</fullName>
    </alternativeName>
</protein>